<organism>
    <name type="scientific">Tupiella akineta</name>
    <name type="common">Green alga</name>
    <name type="synonym">Pseudendoclonium akinetum</name>
    <dbReference type="NCBI Taxonomy" id="160070"/>
    <lineage>
        <taxon>Eukaryota</taxon>
        <taxon>Viridiplantae</taxon>
        <taxon>Chlorophyta</taxon>
        <taxon>Ulvophyceae</taxon>
        <taxon>OUU clade</taxon>
        <taxon>Ulotrichales</taxon>
        <taxon>Tupiellaceae</taxon>
        <taxon>Tupiella</taxon>
    </lineage>
</organism>
<geneLocation type="chloroplast"/>
<sequence>MTLIFQLTLFAFVGLSFLLVVGVPVVFASPNGWTENKQVVFSGIGFWFLLVFAVGILNSFVI</sequence>
<reference key="1">
    <citation type="journal article" date="2005" name="Mol. Biol. Evol.">
        <title>The chloroplast genome sequence of the green alga Pseudendoclonium akinetum (Ulvophyceae) reveals unusual structural features and new insights into the branching order of chlorophyte lineages.</title>
        <authorList>
            <person name="Pombert J.-F."/>
            <person name="Otis C."/>
            <person name="Lemieux C."/>
            <person name="Turmel M."/>
        </authorList>
    </citation>
    <scope>NUCLEOTIDE SEQUENCE [LARGE SCALE GENOMIC DNA]</scope>
    <source>
        <strain>UTEX 1912</strain>
    </source>
</reference>
<comment type="function">
    <text evidence="1">May control the interaction of photosystem II (PSII) cores with the light-harvesting antenna, regulates electron flow through the 2 photosystem reaction centers. PSII is a light-driven water plastoquinone oxidoreductase, using light energy to abstract electrons from H(2)O, generating a proton gradient subsequently used for ATP formation.</text>
</comment>
<comment type="subunit">
    <text evidence="1">PSII is composed of 1 copy each of membrane proteins PsbA, PsbB, PsbC, PsbD, PsbE, PsbF, PsbH, PsbI, PsbJ, PsbK, PsbL, PsbM, PsbT, PsbY, PsbZ, Psb30/Ycf12, at least 3 peripheral proteins of the oxygen-evolving complex and a large number of cofactors. It forms dimeric complexes.</text>
</comment>
<comment type="subcellular location">
    <subcellularLocation>
        <location evidence="1">Plastid</location>
        <location evidence="1">Chloroplast thylakoid membrane</location>
        <topology evidence="1">Multi-pass membrane protein</topology>
    </subcellularLocation>
</comment>
<comment type="similarity">
    <text evidence="1">Belongs to the PsbZ family.</text>
</comment>
<accession>Q3ZJ76</accession>
<protein>
    <recommendedName>
        <fullName evidence="1">Photosystem II reaction center protein Z</fullName>
        <shortName evidence="1">PSII-Z</shortName>
    </recommendedName>
</protein>
<feature type="chain" id="PRO_0000277232" description="Photosystem II reaction center protein Z">
    <location>
        <begin position="1"/>
        <end position="62"/>
    </location>
</feature>
<feature type="transmembrane region" description="Helical" evidence="1">
    <location>
        <begin position="8"/>
        <end position="28"/>
    </location>
</feature>
<feature type="transmembrane region" description="Helical" evidence="1">
    <location>
        <begin position="41"/>
        <end position="61"/>
    </location>
</feature>
<proteinExistence type="inferred from homology"/>
<name>PSBZ_TUPAK</name>
<evidence type="ECO:0000255" key="1">
    <source>
        <dbReference type="HAMAP-Rule" id="MF_00644"/>
    </source>
</evidence>
<keyword id="KW-0150">Chloroplast</keyword>
<keyword id="KW-0472">Membrane</keyword>
<keyword id="KW-0602">Photosynthesis</keyword>
<keyword id="KW-0604">Photosystem II</keyword>
<keyword id="KW-0934">Plastid</keyword>
<keyword id="KW-0674">Reaction center</keyword>
<keyword id="KW-0793">Thylakoid</keyword>
<keyword id="KW-0812">Transmembrane</keyword>
<keyword id="KW-1133">Transmembrane helix</keyword>
<gene>
    <name evidence="1" type="primary">psbZ</name>
</gene>
<dbReference type="EMBL" id="AY835431">
    <property type="protein sequence ID" value="AAV80615.1"/>
    <property type="molecule type" value="Genomic_DNA"/>
</dbReference>
<dbReference type="RefSeq" id="YP_636191.1">
    <property type="nucleotide sequence ID" value="NC_008114.1"/>
</dbReference>
<dbReference type="SMR" id="Q3ZJ76"/>
<dbReference type="GeneID" id="4108817"/>
<dbReference type="GO" id="GO:0009535">
    <property type="term" value="C:chloroplast thylakoid membrane"/>
    <property type="evidence" value="ECO:0007669"/>
    <property type="project" value="UniProtKB-SubCell"/>
</dbReference>
<dbReference type="GO" id="GO:0009539">
    <property type="term" value="C:photosystem II reaction center"/>
    <property type="evidence" value="ECO:0007669"/>
    <property type="project" value="InterPro"/>
</dbReference>
<dbReference type="GO" id="GO:0015979">
    <property type="term" value="P:photosynthesis"/>
    <property type="evidence" value="ECO:0007669"/>
    <property type="project" value="UniProtKB-UniRule"/>
</dbReference>
<dbReference type="GO" id="GO:0042549">
    <property type="term" value="P:photosystem II stabilization"/>
    <property type="evidence" value="ECO:0007669"/>
    <property type="project" value="InterPro"/>
</dbReference>
<dbReference type="Gene3D" id="1.10.287.740">
    <property type="entry name" value="Photosystem II PsbZ, reaction centre"/>
    <property type="match status" value="1"/>
</dbReference>
<dbReference type="HAMAP" id="MF_00644">
    <property type="entry name" value="PSII_PsbZ"/>
    <property type="match status" value="1"/>
</dbReference>
<dbReference type="InterPro" id="IPR002644">
    <property type="entry name" value="PSII_PsbZ"/>
</dbReference>
<dbReference type="InterPro" id="IPR036512">
    <property type="entry name" value="PSII_PsbZ_sf"/>
</dbReference>
<dbReference type="NCBIfam" id="TIGR03043">
    <property type="entry name" value="PS_II_psbZ"/>
    <property type="match status" value="1"/>
</dbReference>
<dbReference type="PANTHER" id="PTHR34971">
    <property type="entry name" value="PHOTOSYSTEM II REACTION CENTER PROTEIN Z"/>
    <property type="match status" value="1"/>
</dbReference>
<dbReference type="PANTHER" id="PTHR34971:SF2">
    <property type="entry name" value="PHOTOSYSTEM II REACTION CENTER PROTEIN Z"/>
    <property type="match status" value="1"/>
</dbReference>
<dbReference type="Pfam" id="PF01737">
    <property type="entry name" value="Ycf9"/>
    <property type="match status" value="1"/>
</dbReference>
<dbReference type="SUPFAM" id="SSF161055">
    <property type="entry name" value="PsbZ-like"/>
    <property type="match status" value="1"/>
</dbReference>